<accession>C1DAS1</accession>
<sequence>MARSIKKGPFVDLHLLKKVDAARSSNDKRPIKTWSRRSTILPDFVGMTIAVHNGRTHVPVYVTENMVGHKLGEFSLTRTFKGHAADKKAKR</sequence>
<feature type="chain" id="PRO_1000146396" description="Small ribosomal subunit protein uS19">
    <location>
        <begin position="1"/>
        <end position="91"/>
    </location>
</feature>
<comment type="function">
    <text evidence="1">Protein S19 forms a complex with S13 that binds strongly to the 16S ribosomal RNA.</text>
</comment>
<comment type="similarity">
    <text evidence="1">Belongs to the universal ribosomal protein uS19 family.</text>
</comment>
<keyword id="KW-1185">Reference proteome</keyword>
<keyword id="KW-0687">Ribonucleoprotein</keyword>
<keyword id="KW-0689">Ribosomal protein</keyword>
<keyword id="KW-0694">RNA-binding</keyword>
<keyword id="KW-0699">rRNA-binding</keyword>
<evidence type="ECO:0000255" key="1">
    <source>
        <dbReference type="HAMAP-Rule" id="MF_00531"/>
    </source>
</evidence>
<evidence type="ECO:0000305" key="2"/>
<gene>
    <name evidence="1" type="primary">rpsS</name>
    <name type="ordered locus">LHK_00257</name>
</gene>
<proteinExistence type="inferred from homology"/>
<name>RS19_LARHH</name>
<reference key="1">
    <citation type="journal article" date="2009" name="PLoS Genet.">
        <title>The complete genome and proteome of Laribacter hongkongensis reveal potential mechanisms for adaptations to different temperatures and habitats.</title>
        <authorList>
            <person name="Woo P.C.Y."/>
            <person name="Lau S.K.P."/>
            <person name="Tse H."/>
            <person name="Teng J.L.L."/>
            <person name="Curreem S.O."/>
            <person name="Tsang A.K.L."/>
            <person name="Fan R.Y.Y."/>
            <person name="Wong G.K.M."/>
            <person name="Huang Y."/>
            <person name="Loman N.J."/>
            <person name="Snyder L.A.S."/>
            <person name="Cai J.J."/>
            <person name="Huang J.-D."/>
            <person name="Mak W."/>
            <person name="Pallen M.J."/>
            <person name="Lok S."/>
            <person name="Yuen K.-Y."/>
        </authorList>
    </citation>
    <scope>NUCLEOTIDE SEQUENCE [LARGE SCALE GENOMIC DNA]</scope>
    <source>
        <strain>HLHK9</strain>
    </source>
</reference>
<protein>
    <recommendedName>
        <fullName evidence="1">Small ribosomal subunit protein uS19</fullName>
    </recommendedName>
    <alternativeName>
        <fullName evidence="2">30S ribosomal protein S19</fullName>
    </alternativeName>
</protein>
<organism>
    <name type="scientific">Laribacter hongkongensis (strain HLHK9)</name>
    <dbReference type="NCBI Taxonomy" id="557598"/>
    <lineage>
        <taxon>Bacteria</taxon>
        <taxon>Pseudomonadati</taxon>
        <taxon>Pseudomonadota</taxon>
        <taxon>Betaproteobacteria</taxon>
        <taxon>Neisseriales</taxon>
        <taxon>Aquaspirillaceae</taxon>
        <taxon>Laribacter</taxon>
    </lineage>
</organism>
<dbReference type="EMBL" id="CP001154">
    <property type="protein sequence ID" value="ACO73252.1"/>
    <property type="molecule type" value="Genomic_DNA"/>
</dbReference>
<dbReference type="RefSeq" id="WP_012695746.1">
    <property type="nucleotide sequence ID" value="NC_012559.1"/>
</dbReference>
<dbReference type="SMR" id="C1DAS1"/>
<dbReference type="STRING" id="557598.LHK_00257"/>
<dbReference type="GeneID" id="75109503"/>
<dbReference type="KEGG" id="lhk:LHK_00257"/>
<dbReference type="eggNOG" id="COG0185">
    <property type="taxonomic scope" value="Bacteria"/>
</dbReference>
<dbReference type="HOGENOM" id="CLU_144911_0_1_4"/>
<dbReference type="Proteomes" id="UP000002010">
    <property type="component" value="Chromosome"/>
</dbReference>
<dbReference type="GO" id="GO:0005737">
    <property type="term" value="C:cytoplasm"/>
    <property type="evidence" value="ECO:0007669"/>
    <property type="project" value="UniProtKB-ARBA"/>
</dbReference>
<dbReference type="GO" id="GO:0015935">
    <property type="term" value="C:small ribosomal subunit"/>
    <property type="evidence" value="ECO:0007669"/>
    <property type="project" value="InterPro"/>
</dbReference>
<dbReference type="GO" id="GO:0019843">
    <property type="term" value="F:rRNA binding"/>
    <property type="evidence" value="ECO:0007669"/>
    <property type="project" value="UniProtKB-UniRule"/>
</dbReference>
<dbReference type="GO" id="GO:0003735">
    <property type="term" value="F:structural constituent of ribosome"/>
    <property type="evidence" value="ECO:0007669"/>
    <property type="project" value="InterPro"/>
</dbReference>
<dbReference type="GO" id="GO:0000028">
    <property type="term" value="P:ribosomal small subunit assembly"/>
    <property type="evidence" value="ECO:0007669"/>
    <property type="project" value="TreeGrafter"/>
</dbReference>
<dbReference type="GO" id="GO:0006412">
    <property type="term" value="P:translation"/>
    <property type="evidence" value="ECO:0007669"/>
    <property type="project" value="UniProtKB-UniRule"/>
</dbReference>
<dbReference type="FunFam" id="3.30.860.10:FF:000001">
    <property type="entry name" value="30S ribosomal protein S19"/>
    <property type="match status" value="1"/>
</dbReference>
<dbReference type="Gene3D" id="3.30.860.10">
    <property type="entry name" value="30s Ribosomal Protein S19, Chain A"/>
    <property type="match status" value="1"/>
</dbReference>
<dbReference type="HAMAP" id="MF_00531">
    <property type="entry name" value="Ribosomal_uS19"/>
    <property type="match status" value="1"/>
</dbReference>
<dbReference type="InterPro" id="IPR002222">
    <property type="entry name" value="Ribosomal_uS19"/>
</dbReference>
<dbReference type="InterPro" id="IPR005732">
    <property type="entry name" value="Ribosomal_uS19_bac-type"/>
</dbReference>
<dbReference type="InterPro" id="IPR020934">
    <property type="entry name" value="Ribosomal_uS19_CS"/>
</dbReference>
<dbReference type="InterPro" id="IPR023575">
    <property type="entry name" value="Ribosomal_uS19_SF"/>
</dbReference>
<dbReference type="NCBIfam" id="TIGR01050">
    <property type="entry name" value="rpsS_bact"/>
    <property type="match status" value="1"/>
</dbReference>
<dbReference type="PANTHER" id="PTHR11880">
    <property type="entry name" value="RIBOSOMAL PROTEIN S19P FAMILY MEMBER"/>
    <property type="match status" value="1"/>
</dbReference>
<dbReference type="PANTHER" id="PTHR11880:SF8">
    <property type="entry name" value="SMALL RIBOSOMAL SUBUNIT PROTEIN US19M"/>
    <property type="match status" value="1"/>
</dbReference>
<dbReference type="Pfam" id="PF00203">
    <property type="entry name" value="Ribosomal_S19"/>
    <property type="match status" value="1"/>
</dbReference>
<dbReference type="PIRSF" id="PIRSF002144">
    <property type="entry name" value="Ribosomal_S19"/>
    <property type="match status" value="1"/>
</dbReference>
<dbReference type="PRINTS" id="PR00975">
    <property type="entry name" value="RIBOSOMALS19"/>
</dbReference>
<dbReference type="SUPFAM" id="SSF54570">
    <property type="entry name" value="Ribosomal protein S19"/>
    <property type="match status" value="1"/>
</dbReference>
<dbReference type="PROSITE" id="PS00323">
    <property type="entry name" value="RIBOSOMAL_S19"/>
    <property type="match status" value="1"/>
</dbReference>